<name>LDH_TREDE</name>
<reference key="1">
    <citation type="journal article" date="2004" name="Proc. Natl. Acad. Sci. U.S.A.">
        <title>Comparison of the genome of the oral pathogen Treponema denticola with other spirochete genomes.</title>
        <authorList>
            <person name="Seshadri R."/>
            <person name="Myers G.S.A."/>
            <person name="Tettelin H."/>
            <person name="Eisen J.A."/>
            <person name="Heidelberg J.F."/>
            <person name="Dodson R.J."/>
            <person name="Davidsen T.M."/>
            <person name="DeBoy R.T."/>
            <person name="Fouts D.E."/>
            <person name="Haft D.H."/>
            <person name="Selengut J."/>
            <person name="Ren Q."/>
            <person name="Brinkac L.M."/>
            <person name="Madupu R."/>
            <person name="Kolonay J.F."/>
            <person name="Durkin S.A."/>
            <person name="Daugherty S.C."/>
            <person name="Shetty J."/>
            <person name="Shvartsbeyn A."/>
            <person name="Gebregeorgis E."/>
            <person name="Geer K."/>
            <person name="Tsegaye G."/>
            <person name="Malek J.A."/>
            <person name="Ayodeji B."/>
            <person name="Shatsman S."/>
            <person name="McLeod M.P."/>
            <person name="Smajs D."/>
            <person name="Howell J.K."/>
            <person name="Pal S."/>
            <person name="Amin A."/>
            <person name="Vashisth P."/>
            <person name="McNeill T.Z."/>
            <person name="Xiang Q."/>
            <person name="Sodergren E."/>
            <person name="Baca E."/>
            <person name="Weinstock G.M."/>
            <person name="Norris S.J."/>
            <person name="Fraser C.M."/>
            <person name="Paulsen I.T."/>
        </authorList>
    </citation>
    <scope>NUCLEOTIDE SEQUENCE [LARGE SCALE GENOMIC DNA]</scope>
    <source>
        <strain>ATCC 35405 / DSM 14222 / CIP 103919 / JCM 8153 / KCTC 15104</strain>
    </source>
</reference>
<gene>
    <name evidence="1" type="primary">ldh</name>
    <name type="ordered locus">TDE_0351</name>
</gene>
<evidence type="ECO:0000255" key="1">
    <source>
        <dbReference type="HAMAP-Rule" id="MF_00488"/>
    </source>
</evidence>
<protein>
    <recommendedName>
        <fullName evidence="1">L-lactate dehydrogenase</fullName>
        <shortName evidence="1">L-LDH</shortName>
        <ecNumber evidence="1">1.1.1.27</ecNumber>
    </recommendedName>
</protein>
<proteinExistence type="inferred from homology"/>
<accession>P62056</accession>
<comment type="function">
    <text evidence="1">Catalyzes the conversion of lactate to pyruvate.</text>
</comment>
<comment type="catalytic activity">
    <reaction evidence="1">
        <text>(S)-lactate + NAD(+) = pyruvate + NADH + H(+)</text>
        <dbReference type="Rhea" id="RHEA:23444"/>
        <dbReference type="ChEBI" id="CHEBI:15361"/>
        <dbReference type="ChEBI" id="CHEBI:15378"/>
        <dbReference type="ChEBI" id="CHEBI:16651"/>
        <dbReference type="ChEBI" id="CHEBI:57540"/>
        <dbReference type="ChEBI" id="CHEBI:57945"/>
        <dbReference type="EC" id="1.1.1.27"/>
    </reaction>
</comment>
<comment type="activity regulation">
    <text evidence="1">Allosterically activated by fructose 1,6-bisphosphate (FBP).</text>
</comment>
<comment type="pathway">
    <text evidence="1">Fermentation; pyruvate fermentation to lactate; (S)-lactate from pyruvate: step 1/1.</text>
</comment>
<comment type="subunit">
    <text evidence="1">Homotetramer.</text>
</comment>
<comment type="subcellular location">
    <subcellularLocation>
        <location evidence="1">Cytoplasm</location>
    </subcellularLocation>
</comment>
<comment type="similarity">
    <text evidence="1">Belongs to the LDH/MDH superfamily. LDH family.</text>
</comment>
<sequence>MDEKKRKVTVVGAGAVGSTFAYALAQSGYADEIAITDMNKNFAEGQALDLVQGLPFLPQVDIHAGDKTDYADSDIVVVTAGAKQQSGETRIDLLKRNASIITGIAKDIAESGCSGVMLIVSNPVDILTRAALKASGWERGRVIGSGTVLDTARFRYTLSKECGVDARNIHGYILGEHGDSEFAAWSMTSVAGRRIDEYCSGGVCSSGPHFDKAKILEEVRNSAYHIIDYKGSTYFAVGLALTRIAGAILRNEHSILSVSMTLDGEFGLKDVCLSVPCIVGRSGAERVIESDLPADEQAALEASAKRLKEAFTEMN</sequence>
<dbReference type="EC" id="1.1.1.27" evidence="1"/>
<dbReference type="EMBL" id="AE017226">
    <property type="protein sequence ID" value="AAS10846.1"/>
    <property type="molecule type" value="Genomic_DNA"/>
</dbReference>
<dbReference type="RefSeq" id="NP_970965.1">
    <property type="nucleotide sequence ID" value="NC_002967.9"/>
</dbReference>
<dbReference type="RefSeq" id="WP_002684979.1">
    <property type="nucleotide sequence ID" value="NC_002967.9"/>
</dbReference>
<dbReference type="SMR" id="P62056"/>
<dbReference type="STRING" id="243275.TDE_0351"/>
<dbReference type="PaxDb" id="243275-TDE_0351"/>
<dbReference type="GeneID" id="2740158"/>
<dbReference type="KEGG" id="tde:TDE_0351"/>
<dbReference type="PATRIC" id="fig|243275.7.peg.340"/>
<dbReference type="eggNOG" id="COG0039">
    <property type="taxonomic scope" value="Bacteria"/>
</dbReference>
<dbReference type="HOGENOM" id="CLU_045401_1_1_12"/>
<dbReference type="OrthoDB" id="9802969at2"/>
<dbReference type="UniPathway" id="UPA00554">
    <property type="reaction ID" value="UER00611"/>
</dbReference>
<dbReference type="Proteomes" id="UP000008212">
    <property type="component" value="Chromosome"/>
</dbReference>
<dbReference type="GO" id="GO:0005737">
    <property type="term" value="C:cytoplasm"/>
    <property type="evidence" value="ECO:0007669"/>
    <property type="project" value="UniProtKB-SubCell"/>
</dbReference>
<dbReference type="GO" id="GO:0004459">
    <property type="term" value="F:L-lactate dehydrogenase activity"/>
    <property type="evidence" value="ECO:0007669"/>
    <property type="project" value="UniProtKB-UniRule"/>
</dbReference>
<dbReference type="GO" id="GO:0006096">
    <property type="term" value="P:glycolytic process"/>
    <property type="evidence" value="ECO:0007669"/>
    <property type="project" value="UniProtKB-UniRule"/>
</dbReference>
<dbReference type="GO" id="GO:0006089">
    <property type="term" value="P:lactate metabolic process"/>
    <property type="evidence" value="ECO:0007669"/>
    <property type="project" value="TreeGrafter"/>
</dbReference>
<dbReference type="CDD" id="cd05292">
    <property type="entry name" value="LDH_2"/>
    <property type="match status" value="1"/>
</dbReference>
<dbReference type="Gene3D" id="3.90.110.10">
    <property type="entry name" value="Lactate dehydrogenase/glycoside hydrolase, family 4, C-terminal"/>
    <property type="match status" value="1"/>
</dbReference>
<dbReference type="Gene3D" id="3.40.50.720">
    <property type="entry name" value="NAD(P)-binding Rossmann-like Domain"/>
    <property type="match status" value="1"/>
</dbReference>
<dbReference type="HAMAP" id="MF_00488">
    <property type="entry name" value="Lactate_dehydrog"/>
    <property type="match status" value="1"/>
</dbReference>
<dbReference type="InterPro" id="IPR001557">
    <property type="entry name" value="L-lactate/malate_DH"/>
</dbReference>
<dbReference type="InterPro" id="IPR011304">
    <property type="entry name" value="L-lactate_DH"/>
</dbReference>
<dbReference type="InterPro" id="IPR018177">
    <property type="entry name" value="L-lactate_DH_AS"/>
</dbReference>
<dbReference type="InterPro" id="IPR022383">
    <property type="entry name" value="Lactate/malate_DH_C"/>
</dbReference>
<dbReference type="InterPro" id="IPR001236">
    <property type="entry name" value="Lactate/malate_DH_N"/>
</dbReference>
<dbReference type="InterPro" id="IPR015955">
    <property type="entry name" value="Lactate_DH/Glyco_Ohase_4_C"/>
</dbReference>
<dbReference type="InterPro" id="IPR036291">
    <property type="entry name" value="NAD(P)-bd_dom_sf"/>
</dbReference>
<dbReference type="NCBIfam" id="TIGR01771">
    <property type="entry name" value="L-LDH-NAD"/>
    <property type="match status" value="1"/>
</dbReference>
<dbReference type="NCBIfam" id="NF000824">
    <property type="entry name" value="PRK00066.1"/>
    <property type="match status" value="1"/>
</dbReference>
<dbReference type="PANTHER" id="PTHR43128">
    <property type="entry name" value="L-2-HYDROXYCARBOXYLATE DEHYDROGENASE (NAD(P)(+))"/>
    <property type="match status" value="1"/>
</dbReference>
<dbReference type="PANTHER" id="PTHR43128:SF16">
    <property type="entry name" value="L-LACTATE DEHYDROGENASE"/>
    <property type="match status" value="1"/>
</dbReference>
<dbReference type="Pfam" id="PF02866">
    <property type="entry name" value="Ldh_1_C"/>
    <property type="match status" value="1"/>
</dbReference>
<dbReference type="Pfam" id="PF00056">
    <property type="entry name" value="Ldh_1_N"/>
    <property type="match status" value="1"/>
</dbReference>
<dbReference type="PIRSF" id="PIRSF000102">
    <property type="entry name" value="Lac_mal_DH"/>
    <property type="match status" value="1"/>
</dbReference>
<dbReference type="PRINTS" id="PR00086">
    <property type="entry name" value="LLDHDRGNASE"/>
</dbReference>
<dbReference type="SUPFAM" id="SSF56327">
    <property type="entry name" value="LDH C-terminal domain-like"/>
    <property type="match status" value="1"/>
</dbReference>
<dbReference type="SUPFAM" id="SSF51735">
    <property type="entry name" value="NAD(P)-binding Rossmann-fold domains"/>
    <property type="match status" value="1"/>
</dbReference>
<dbReference type="PROSITE" id="PS00064">
    <property type="entry name" value="L_LDH"/>
    <property type="match status" value="1"/>
</dbReference>
<keyword id="KW-0021">Allosteric enzyme</keyword>
<keyword id="KW-0963">Cytoplasm</keyword>
<keyword id="KW-0520">NAD</keyword>
<keyword id="KW-0560">Oxidoreductase</keyword>
<keyword id="KW-0597">Phosphoprotein</keyword>
<keyword id="KW-1185">Reference proteome</keyword>
<organism>
    <name type="scientific">Treponema denticola (strain ATCC 35405 / DSM 14222 / CIP 103919 / JCM 8153 / KCTC 15104)</name>
    <dbReference type="NCBI Taxonomy" id="243275"/>
    <lineage>
        <taxon>Bacteria</taxon>
        <taxon>Pseudomonadati</taxon>
        <taxon>Spirochaetota</taxon>
        <taxon>Spirochaetia</taxon>
        <taxon>Spirochaetales</taxon>
        <taxon>Treponemataceae</taxon>
        <taxon>Treponema</taxon>
    </lineage>
</organism>
<feature type="chain" id="PRO_0000168409" description="L-lactate dehydrogenase">
    <location>
        <begin position="1"/>
        <end position="315"/>
    </location>
</feature>
<feature type="active site" description="Proton acceptor" evidence="1">
    <location>
        <position position="177"/>
    </location>
</feature>
<feature type="binding site" evidence="1">
    <location>
        <position position="16"/>
    </location>
    <ligand>
        <name>NAD(+)</name>
        <dbReference type="ChEBI" id="CHEBI:57540"/>
    </ligand>
</feature>
<feature type="binding site" evidence="1">
    <location>
        <position position="37"/>
    </location>
    <ligand>
        <name>NAD(+)</name>
        <dbReference type="ChEBI" id="CHEBI:57540"/>
    </ligand>
</feature>
<feature type="binding site" evidence="1">
    <location>
        <begin position="81"/>
        <end position="82"/>
    </location>
    <ligand>
        <name>NAD(+)</name>
        <dbReference type="ChEBI" id="CHEBI:57540"/>
    </ligand>
</feature>
<feature type="binding site" evidence="1">
    <location>
        <position position="84"/>
    </location>
    <ligand>
        <name>substrate</name>
    </ligand>
</feature>
<feature type="binding site" evidence="1">
    <location>
        <position position="90"/>
    </location>
    <ligand>
        <name>substrate</name>
    </ligand>
</feature>
<feature type="binding site" evidence="1">
    <location>
        <begin position="120"/>
        <end position="122"/>
    </location>
    <ligand>
        <name>NAD(+)</name>
        <dbReference type="ChEBI" id="CHEBI:57540"/>
    </ligand>
</feature>
<feature type="binding site" evidence="1">
    <location>
        <begin position="122"/>
        <end position="125"/>
    </location>
    <ligand>
        <name>substrate</name>
    </ligand>
</feature>
<feature type="binding site" evidence="1">
    <location>
        <position position="145"/>
    </location>
    <ligand>
        <name>NAD(+)</name>
        <dbReference type="ChEBI" id="CHEBI:57540"/>
    </ligand>
</feature>
<feature type="binding site" evidence="1">
    <location>
        <begin position="150"/>
        <end position="153"/>
    </location>
    <ligand>
        <name>substrate</name>
    </ligand>
</feature>
<feature type="binding site" evidence="1">
    <location>
        <position position="155"/>
    </location>
    <ligand>
        <name>beta-D-fructose 1,6-bisphosphate</name>
        <dbReference type="ChEBI" id="CHEBI:32966"/>
        <note>allosteric activator</note>
    </ligand>
</feature>
<feature type="binding site" evidence="1">
    <location>
        <position position="170"/>
    </location>
    <ligand>
        <name>beta-D-fructose 1,6-bisphosphate</name>
        <dbReference type="ChEBI" id="CHEBI:32966"/>
        <note>allosteric activator</note>
    </ligand>
</feature>
<feature type="binding site" evidence="1">
    <location>
        <position position="233"/>
    </location>
    <ligand>
        <name>substrate</name>
    </ligand>
</feature>
<feature type="modified residue" description="Phosphotyrosine" evidence="1">
    <location>
        <position position="224"/>
    </location>
</feature>